<comment type="function">
    <text evidence="1">Negatively regulates transcription of bacterial ribonucleotide reductase nrd genes and operons by binding to NrdR-boxes.</text>
</comment>
<comment type="cofactor">
    <cofactor evidence="1">
        <name>Zn(2+)</name>
        <dbReference type="ChEBI" id="CHEBI:29105"/>
    </cofactor>
    <text evidence="1">Binds 1 zinc ion.</text>
</comment>
<comment type="similarity">
    <text evidence="1">Belongs to the NrdR family.</text>
</comment>
<dbReference type="EMBL" id="CP001614">
    <property type="protein sequence ID" value="ACR14711.1"/>
    <property type="molecule type" value="Genomic_DNA"/>
</dbReference>
<dbReference type="RefSeq" id="WP_015820825.1">
    <property type="nucleotide sequence ID" value="NC_012997.1"/>
</dbReference>
<dbReference type="SMR" id="C5BS89"/>
<dbReference type="STRING" id="377629.TERTU_3705"/>
<dbReference type="GeneID" id="58411012"/>
<dbReference type="GeneID" id="93855220"/>
<dbReference type="KEGG" id="ttu:TERTU_3705"/>
<dbReference type="eggNOG" id="COG1327">
    <property type="taxonomic scope" value="Bacteria"/>
</dbReference>
<dbReference type="HOGENOM" id="CLU_108412_0_0_6"/>
<dbReference type="OrthoDB" id="9807461at2"/>
<dbReference type="Proteomes" id="UP000009080">
    <property type="component" value="Chromosome"/>
</dbReference>
<dbReference type="GO" id="GO:0005524">
    <property type="term" value="F:ATP binding"/>
    <property type="evidence" value="ECO:0007669"/>
    <property type="project" value="UniProtKB-KW"/>
</dbReference>
<dbReference type="GO" id="GO:0003677">
    <property type="term" value="F:DNA binding"/>
    <property type="evidence" value="ECO:0007669"/>
    <property type="project" value="UniProtKB-KW"/>
</dbReference>
<dbReference type="GO" id="GO:0008270">
    <property type="term" value="F:zinc ion binding"/>
    <property type="evidence" value="ECO:0007669"/>
    <property type="project" value="UniProtKB-UniRule"/>
</dbReference>
<dbReference type="GO" id="GO:0045892">
    <property type="term" value="P:negative regulation of DNA-templated transcription"/>
    <property type="evidence" value="ECO:0007669"/>
    <property type="project" value="UniProtKB-UniRule"/>
</dbReference>
<dbReference type="HAMAP" id="MF_00440">
    <property type="entry name" value="NrdR"/>
    <property type="match status" value="1"/>
</dbReference>
<dbReference type="InterPro" id="IPR005144">
    <property type="entry name" value="ATP-cone_dom"/>
</dbReference>
<dbReference type="InterPro" id="IPR055173">
    <property type="entry name" value="NrdR-like_N"/>
</dbReference>
<dbReference type="InterPro" id="IPR003796">
    <property type="entry name" value="RNR_NrdR-like"/>
</dbReference>
<dbReference type="NCBIfam" id="TIGR00244">
    <property type="entry name" value="transcriptional regulator NrdR"/>
    <property type="match status" value="1"/>
</dbReference>
<dbReference type="PANTHER" id="PTHR30455">
    <property type="entry name" value="TRANSCRIPTIONAL REPRESSOR NRDR"/>
    <property type="match status" value="1"/>
</dbReference>
<dbReference type="PANTHER" id="PTHR30455:SF2">
    <property type="entry name" value="TRANSCRIPTIONAL REPRESSOR NRDR"/>
    <property type="match status" value="1"/>
</dbReference>
<dbReference type="Pfam" id="PF03477">
    <property type="entry name" value="ATP-cone"/>
    <property type="match status" value="1"/>
</dbReference>
<dbReference type="Pfam" id="PF22811">
    <property type="entry name" value="Zn_ribbon_NrdR"/>
    <property type="match status" value="1"/>
</dbReference>
<dbReference type="PROSITE" id="PS51161">
    <property type="entry name" value="ATP_CONE"/>
    <property type="match status" value="1"/>
</dbReference>
<organism>
    <name type="scientific">Teredinibacter turnerae (strain ATCC 39867 / T7901)</name>
    <dbReference type="NCBI Taxonomy" id="377629"/>
    <lineage>
        <taxon>Bacteria</taxon>
        <taxon>Pseudomonadati</taxon>
        <taxon>Pseudomonadota</taxon>
        <taxon>Gammaproteobacteria</taxon>
        <taxon>Cellvibrionales</taxon>
        <taxon>Cellvibrionaceae</taxon>
        <taxon>Teredinibacter</taxon>
    </lineage>
</organism>
<accession>C5BS89</accession>
<evidence type="ECO:0000255" key="1">
    <source>
        <dbReference type="HAMAP-Rule" id="MF_00440"/>
    </source>
</evidence>
<protein>
    <recommendedName>
        <fullName evidence="1">Transcriptional repressor NrdR</fullName>
    </recommendedName>
</protein>
<gene>
    <name evidence="1" type="primary">nrdR</name>
    <name type="ordered locus">TERTU_3705</name>
</gene>
<proteinExistence type="inferred from homology"/>
<name>NRDR_TERTT</name>
<reference key="1">
    <citation type="journal article" date="2009" name="PLoS ONE">
        <title>The complete genome of Teredinibacter turnerae T7901: an intracellular endosymbiont of marine wood-boring bivalves (shipworms).</title>
        <authorList>
            <person name="Yang J.C."/>
            <person name="Madupu R."/>
            <person name="Durkin A.S."/>
            <person name="Ekborg N.A."/>
            <person name="Pedamallu C.S."/>
            <person name="Hostetler J.B."/>
            <person name="Radune D."/>
            <person name="Toms B.S."/>
            <person name="Henrissat B."/>
            <person name="Coutinho P.M."/>
            <person name="Schwarz S."/>
            <person name="Field L."/>
            <person name="Trindade-Silva A.E."/>
            <person name="Soares C.A.G."/>
            <person name="Elshahawi S."/>
            <person name="Hanora A."/>
            <person name="Schmidt E.W."/>
            <person name="Haygood M.G."/>
            <person name="Posfai J."/>
            <person name="Benner J."/>
            <person name="Madinger C."/>
            <person name="Nove J."/>
            <person name="Anton B."/>
            <person name="Chaudhary K."/>
            <person name="Foster J."/>
            <person name="Holman A."/>
            <person name="Kumar S."/>
            <person name="Lessard P.A."/>
            <person name="Luyten Y.A."/>
            <person name="Slatko B."/>
            <person name="Wood N."/>
            <person name="Wu B."/>
            <person name="Teplitski M."/>
            <person name="Mougous J.D."/>
            <person name="Ward N."/>
            <person name="Eisen J.A."/>
            <person name="Badger J.H."/>
            <person name="Distel D.L."/>
        </authorList>
    </citation>
    <scope>NUCLEOTIDE SEQUENCE [LARGE SCALE GENOMIC DNA]</scope>
    <source>
        <strain>ATCC 39867 / T7901</strain>
    </source>
</reference>
<feature type="chain" id="PRO_1000206127" description="Transcriptional repressor NrdR">
    <location>
        <begin position="1"/>
        <end position="155"/>
    </location>
</feature>
<feature type="domain" description="ATP-cone" evidence="1">
    <location>
        <begin position="49"/>
        <end position="139"/>
    </location>
</feature>
<feature type="zinc finger region" evidence="1">
    <location>
        <begin position="3"/>
        <end position="34"/>
    </location>
</feature>
<keyword id="KW-0067">ATP-binding</keyword>
<keyword id="KW-0238">DNA-binding</keyword>
<keyword id="KW-0479">Metal-binding</keyword>
<keyword id="KW-0547">Nucleotide-binding</keyword>
<keyword id="KW-1185">Reference proteome</keyword>
<keyword id="KW-0678">Repressor</keyword>
<keyword id="KW-0804">Transcription</keyword>
<keyword id="KW-0805">Transcription regulation</keyword>
<keyword id="KW-0862">Zinc</keyword>
<keyword id="KW-0863">Zinc-finger</keyword>
<sequence length="155" mass="18079">MHCPFCNQTDTKVIDSRLVADGVQVRRRRECQACHERFTTFETAELLMPKVIKQDGTREPFDEEKLRNGLQRALEKRPVSVEAIETALHNVRHYLQALGEREIKSLVIGEKVMEELQNLDQVAYVRFASVYRSFQDISEFRAEIDRLQKKPDETA</sequence>